<gene>
    <name evidence="6" type="primary">cheB</name>
    <name type="ORF">CHGG_01240</name>
</gene>
<dbReference type="EC" id="1.-.-.-" evidence="8"/>
<dbReference type="EMBL" id="CH408029">
    <property type="protein sequence ID" value="EAQ93005.1"/>
    <property type="molecule type" value="Genomic_DNA"/>
</dbReference>
<dbReference type="RefSeq" id="XP_001220461.1">
    <property type="nucleotide sequence ID" value="XM_001220460.1"/>
</dbReference>
<dbReference type="SMR" id="Q2HEW4"/>
<dbReference type="FunCoup" id="Q2HEW4">
    <property type="interactions" value="206"/>
</dbReference>
<dbReference type="GeneID" id="4387646"/>
<dbReference type="VEuPathDB" id="FungiDB:CHGG_01240"/>
<dbReference type="eggNOG" id="KOG1198">
    <property type="taxonomic scope" value="Eukaryota"/>
</dbReference>
<dbReference type="HOGENOM" id="CLU_026673_16_1_1"/>
<dbReference type="InParanoid" id="Q2HEW4"/>
<dbReference type="OMA" id="DFKMPLR"/>
<dbReference type="OrthoDB" id="48317at2759"/>
<dbReference type="BioCyc" id="MetaCyc:MONOMER-19095"/>
<dbReference type="Proteomes" id="UP000001056">
    <property type="component" value="Unassembled WGS sequence"/>
</dbReference>
<dbReference type="GO" id="GO:0000166">
    <property type="term" value="F:nucleotide binding"/>
    <property type="evidence" value="ECO:0007669"/>
    <property type="project" value="UniProtKB-KW"/>
</dbReference>
<dbReference type="GO" id="GO:0016651">
    <property type="term" value="F:oxidoreductase activity, acting on NAD(P)H"/>
    <property type="evidence" value="ECO:0007669"/>
    <property type="project" value="InterPro"/>
</dbReference>
<dbReference type="CDD" id="cd08249">
    <property type="entry name" value="enoyl_reductase_like"/>
    <property type="match status" value="1"/>
</dbReference>
<dbReference type="Gene3D" id="3.90.180.10">
    <property type="entry name" value="Medium-chain alcohol dehydrogenases, catalytic domain"/>
    <property type="match status" value="1"/>
</dbReference>
<dbReference type="Gene3D" id="3.40.50.720">
    <property type="entry name" value="NAD(P)-binding Rossmann-like Domain"/>
    <property type="match status" value="1"/>
</dbReference>
<dbReference type="InterPro" id="IPR013154">
    <property type="entry name" value="ADH-like_N"/>
</dbReference>
<dbReference type="InterPro" id="IPR011032">
    <property type="entry name" value="GroES-like_sf"/>
</dbReference>
<dbReference type="InterPro" id="IPR036291">
    <property type="entry name" value="NAD(P)-bd_dom_sf"/>
</dbReference>
<dbReference type="InterPro" id="IPR020843">
    <property type="entry name" value="PKS_ER"/>
</dbReference>
<dbReference type="InterPro" id="IPR047122">
    <property type="entry name" value="Trans-enoyl_RdTase-like"/>
</dbReference>
<dbReference type="PANTHER" id="PTHR45348">
    <property type="entry name" value="HYPOTHETICAL OXIDOREDUCTASE (EUROFUNG)"/>
    <property type="match status" value="1"/>
</dbReference>
<dbReference type="PANTHER" id="PTHR45348:SF1">
    <property type="entry name" value="TRANS-ENOYL REDUCTASE STHE"/>
    <property type="match status" value="1"/>
</dbReference>
<dbReference type="Pfam" id="PF08240">
    <property type="entry name" value="ADH_N"/>
    <property type="match status" value="1"/>
</dbReference>
<dbReference type="SMART" id="SM00829">
    <property type="entry name" value="PKS_ER"/>
    <property type="match status" value="1"/>
</dbReference>
<dbReference type="SUPFAM" id="SSF50129">
    <property type="entry name" value="GroES-like"/>
    <property type="match status" value="1"/>
</dbReference>
<dbReference type="SUPFAM" id="SSF51735">
    <property type="entry name" value="NAD(P)-binding Rossmann-fold domains"/>
    <property type="match status" value="1"/>
</dbReference>
<protein>
    <recommendedName>
        <fullName evidence="6">Enoyl reductase cheB</fullName>
        <ecNumber evidence="8">1.-.-.-</ecNumber>
    </recommendedName>
    <alternativeName>
        <fullName evidence="6">Chaetoglobosin A biosynthesis cluster protein B</fullName>
    </alternativeName>
</protein>
<accession>Q2HEW4</accession>
<sequence>MGSFEIPEKHTALLQGEGGSLVIARDVPLPTLGPGHLLVKTAAVALNPCDFKTPAAFPNPGYYNGCDFAGTVVALGSDNIRDGGPWKIGDRIFGAIHGANPSDWDSGSHAEYVKAVSVFSYRIPDWMTFEEAAGLSPCCIATMGVSLFKALELPGTFEEPATKPLDVLIYGGSSSVGSLGIQMVKLTGHRLGHRCITTCSPKNFDLVKSYGADEVFDYKSPTCAQDIRKATRNCLKYAVDPFGEVKTMAICTEAIGRAGGRYSALEKFQEDVCDRKTVKRELTMGAIIIGHGLDLGGRYTRPHSPEMRAWGIEWYKSIQRLVDARKFKPHPIRVLKGGFEDMLEGLAMLKRREISAEKLVVSLDPAVSGLTADSTAR</sequence>
<feature type="chain" id="PRO_0000438242" description="Enoyl reductase cheB">
    <location>
        <begin position="1"/>
        <end position="377"/>
    </location>
</feature>
<feature type="region of interest" description="Enoyl reductase (ER) domain" evidence="3">
    <location>
        <begin position="18"/>
        <end position="361"/>
    </location>
</feature>
<feature type="binding site" evidence="2">
    <location>
        <begin position="49"/>
        <end position="52"/>
    </location>
    <ligand>
        <name>NADP(+)</name>
        <dbReference type="ChEBI" id="CHEBI:58349"/>
    </ligand>
</feature>
<feature type="binding site" evidence="3">
    <location>
        <begin position="137"/>
        <end position="144"/>
    </location>
    <ligand>
        <name>substrate</name>
    </ligand>
</feature>
<feature type="binding site" evidence="2">
    <location>
        <begin position="173"/>
        <end position="176"/>
    </location>
    <ligand>
        <name>NADP(+)</name>
        <dbReference type="ChEBI" id="CHEBI:58349"/>
    </ligand>
</feature>
<feature type="binding site" evidence="2">
    <location>
        <begin position="200"/>
        <end position="203"/>
    </location>
    <ligand>
        <name>NADP(+)</name>
        <dbReference type="ChEBI" id="CHEBI:58349"/>
    </ligand>
</feature>
<feature type="binding site" evidence="2">
    <location>
        <position position="218"/>
    </location>
    <ligand>
        <name>NADP(+)</name>
        <dbReference type="ChEBI" id="CHEBI:58349"/>
    </ligand>
</feature>
<feature type="binding site" evidence="2">
    <location>
        <begin position="265"/>
        <end position="266"/>
    </location>
    <ligand>
        <name>NADP(+)</name>
        <dbReference type="ChEBI" id="CHEBI:58349"/>
    </ligand>
</feature>
<feature type="binding site" evidence="2">
    <location>
        <position position="283"/>
    </location>
    <ligand>
        <name>NADP(+)</name>
        <dbReference type="ChEBI" id="CHEBI:58349"/>
    </ligand>
</feature>
<feature type="binding site" evidence="3">
    <location>
        <begin position="285"/>
        <end position="289"/>
    </location>
    <ligand>
        <name>substrate</name>
    </ligand>
</feature>
<feature type="binding site" evidence="2">
    <location>
        <begin position="354"/>
        <end position="355"/>
    </location>
    <ligand>
        <name>NADP(+)</name>
        <dbReference type="ChEBI" id="CHEBI:58349"/>
    </ligand>
</feature>
<evidence type="ECO:0000250" key="1">
    <source>
        <dbReference type="UniProtKB" id="P04798"/>
    </source>
</evidence>
<evidence type="ECO:0000250" key="2">
    <source>
        <dbReference type="UniProtKB" id="Q9Y7D0"/>
    </source>
</evidence>
<evidence type="ECO:0000255" key="3"/>
<evidence type="ECO:0000269" key="4">
    <source>
    </source>
</evidence>
<evidence type="ECO:0000269" key="5">
    <source>
    </source>
</evidence>
<evidence type="ECO:0000303" key="6">
    <source>
    </source>
</evidence>
<evidence type="ECO:0000305" key="7"/>
<evidence type="ECO:0000305" key="8">
    <source>
    </source>
</evidence>
<evidence type="ECO:0000305" key="9">
    <source>
    </source>
</evidence>
<keyword id="KW-0521">NADP</keyword>
<keyword id="KW-0547">Nucleotide-binding</keyword>
<keyword id="KW-0560">Oxidoreductase</keyword>
<keyword id="KW-1185">Reference proteome</keyword>
<organism>
    <name type="scientific">Chaetomium globosum (strain ATCC 6205 / CBS 148.51 / DSM 1962 / NBRC 6347 / NRRL 1970)</name>
    <name type="common">Soil fungus</name>
    <dbReference type="NCBI Taxonomy" id="306901"/>
    <lineage>
        <taxon>Eukaryota</taxon>
        <taxon>Fungi</taxon>
        <taxon>Dikarya</taxon>
        <taxon>Ascomycota</taxon>
        <taxon>Pezizomycotina</taxon>
        <taxon>Sordariomycetes</taxon>
        <taxon>Sordariomycetidae</taxon>
        <taxon>Sordariales</taxon>
        <taxon>Chaetomiaceae</taxon>
        <taxon>Chaetomium</taxon>
    </lineage>
</organism>
<name>CHEB_CHAGB</name>
<proteinExistence type="evidence at transcript level"/>
<comment type="function">
    <text evidence="4 5 9">Enoyl reductase; part of the gene cluster that mediates the biosynthesis of chaetoglobosin A which has a unique inhibitory activity against actin polymerization in mammalian cells (PubMed:23611317, PubMed:33622536). Chaetoglobosin A and its intermediates are involved in the morphological differentiation of C.globosum (PubMed:33622536). The first step of the pathway is the synthesis of prochaetoglobosin I via condensation of one acetyl-CoA, 8 malonyl-CoA, and a L-tryptophan molecule by the PKS-NRPS hybrid synthetase cheA, followed by reduction of backbone double bond to install desired geometry by the enoyl reductase cheB (PubMed:23611317). Further multiple oxidation steps performed by the cytochrome P450 monooxygenases cheE and cheG, as well as by the FAD-linked oxidoreductase cheF, lead to the formation of chaetoglobosin A (PubMed:23611317). Depending on the order of action of these reductases, distinct intermediates can be identified (PubMed:23611317). Within the pathway, the cytochrome P450 monooxygenase cheE catalyzes a stereospecific epoxidation on prochaetoglobosin I, cytoglobosin D, and chaetoglobosin J intermediates (PubMed:23611317). The FAD-linked oxidoreductase cheF performs dehydrogenation of the C-20 hydroxyl groups in the 20-dihyrochaetoglobosin A and cytoglobosin D intermediates (PubMed:23611317). Finally, the cytochrome P450 monooxygenase cheG can catalyze the stereospecific dihydroxylation of prochaetoglobosin I and prochaetoglobosin IV at C-19 and C-20, respectively (PubMed:23611317). The Diels-Alderase cheD may play a role in the post-PKS-NRPS biosynthetic steps catalyzing Diels-Alder cyclization (Probable).</text>
</comment>
<comment type="cofactor">
    <cofactor evidence="1">
        <name>heme</name>
        <dbReference type="ChEBI" id="CHEBI:30413"/>
    </cofactor>
</comment>
<comment type="pathway">
    <text evidence="4">Secondary metabolite biosynthesis.</text>
</comment>
<comment type="induction">
    <text evidence="5">Expression is positively regulated by the cluster-specific transcription factor cheR that binds directly to an asymmetric direct repeat present in the promoter.</text>
</comment>
<comment type="disruption phenotype">
    <text evidence="4">Abolishes the production of chaetoglobosin A and 20-dihyrochaetoglobosin A (PubMed:23611317).</text>
</comment>
<comment type="similarity">
    <text evidence="7">Belongs to the zinc-containing alcohol dehydrogenase family.</text>
</comment>
<reference key="1">
    <citation type="journal article" date="2015" name="Genome Announc.">
        <title>Draft genome sequence of the cellulolytic fungus Chaetomium globosum.</title>
        <authorList>
            <person name="Cuomo C.A."/>
            <person name="Untereiner W.A."/>
            <person name="Ma L.-J."/>
            <person name="Grabherr M."/>
            <person name="Birren B.W."/>
        </authorList>
    </citation>
    <scope>NUCLEOTIDE SEQUENCE [LARGE SCALE GENOMIC DNA]</scope>
    <source>
        <strain>ATCC 6205 / CBS 148.51 / DSM 1962 / NBRC 6347 / NRRL 1970</strain>
    </source>
</reference>
<reference key="2">
    <citation type="journal article" date="2013" name="J. Am. Chem. Soc.">
        <title>Combinatorial generation of complexity by redox enzymes in the chaetoglobosin A biosynthesis.</title>
        <authorList>
            <person name="Ishiuchi K."/>
            <person name="Nakazawa T."/>
            <person name="Yagishita F."/>
            <person name="Mino T."/>
            <person name="Noguchi H."/>
            <person name="Hotta K."/>
            <person name="Watanabe K."/>
        </authorList>
    </citation>
    <scope>FUNCTION</scope>
    <scope>DISRUPTION PHENOTYPE</scope>
</reference>
<reference key="3">
    <citation type="journal article" date="2021" name="Fungal Biol.">
        <title>Functional analysis of a chaetoglobosin A biosynthetic regulator in Chaetomium globosum.</title>
        <authorList>
            <person name="Cheng M."/>
            <person name="Zhao S."/>
            <person name="Liu H."/>
            <person name="Liu Y."/>
            <person name="Lin C."/>
            <person name="Song J."/>
            <person name="Thawai C."/>
            <person name="Charoensettasilp S."/>
            <person name="Yang Q."/>
        </authorList>
    </citation>
    <scope>FUNCTION</scope>
    <scope>INDUCTION</scope>
</reference>